<gene>
    <name evidence="1" type="primary">mtlD</name>
    <name type="ordered locus">Arth_4003</name>
</gene>
<evidence type="ECO:0000255" key="1">
    <source>
        <dbReference type="HAMAP-Rule" id="MF_00196"/>
    </source>
</evidence>
<accession>A0K258</accession>
<reference key="1">
    <citation type="journal article" date="2013" name="Stand. Genomic Sci.">
        <title>Complete genome sequence of Arthrobacter sp. strain FB24.</title>
        <authorList>
            <person name="Nakatsu C.H."/>
            <person name="Barabote R."/>
            <person name="Thompson S."/>
            <person name="Bruce D."/>
            <person name="Detter C."/>
            <person name="Brettin T."/>
            <person name="Han C."/>
            <person name="Beasley F."/>
            <person name="Chen W."/>
            <person name="Konopka A."/>
            <person name="Xie G."/>
        </authorList>
    </citation>
    <scope>NUCLEOTIDE SEQUENCE [LARGE SCALE GENOMIC DNA]</scope>
    <source>
        <strain>FB24</strain>
    </source>
</reference>
<comment type="catalytic activity">
    <reaction evidence="1">
        <text>D-mannitol 1-phosphate + NAD(+) = beta-D-fructose 6-phosphate + NADH + H(+)</text>
        <dbReference type="Rhea" id="RHEA:19661"/>
        <dbReference type="ChEBI" id="CHEBI:15378"/>
        <dbReference type="ChEBI" id="CHEBI:57540"/>
        <dbReference type="ChEBI" id="CHEBI:57634"/>
        <dbReference type="ChEBI" id="CHEBI:57945"/>
        <dbReference type="ChEBI" id="CHEBI:61381"/>
        <dbReference type="EC" id="1.1.1.17"/>
    </reaction>
</comment>
<comment type="similarity">
    <text evidence="1">Belongs to the mannitol dehydrogenase family.</text>
</comment>
<keyword id="KW-0520">NAD</keyword>
<keyword id="KW-0560">Oxidoreductase</keyword>
<keyword id="KW-1185">Reference proteome</keyword>
<feature type="chain" id="PRO_1000011793" description="Mannitol-1-phosphate 5-dehydrogenase">
    <location>
        <begin position="1"/>
        <end position="384"/>
    </location>
</feature>
<feature type="binding site" evidence="1">
    <location>
        <begin position="3"/>
        <end position="14"/>
    </location>
    <ligand>
        <name>NAD(+)</name>
        <dbReference type="ChEBI" id="CHEBI:57540"/>
    </ligand>
</feature>
<name>MTLD_ARTS2</name>
<protein>
    <recommendedName>
        <fullName evidence="1">Mannitol-1-phosphate 5-dehydrogenase</fullName>
        <ecNumber evidence="1">1.1.1.17</ecNumber>
    </recommendedName>
</protein>
<proteinExistence type="inferred from homology"/>
<sequence length="384" mass="40805">MKAVHFGAGNIGRGFVGLLLHQAGYELVFADVAEELISQLAAADSYDVHEVGDNPTVRTVDNFRALNSATQEADVVAEIATADVVTTAVGPHILKFVAPVIAKGIAARAAGLAPLQVMACENAINATDILRDEVAAQWDPAAGPLEAVAVFANTAVDRIVPNQEPGKGLDVTVETFYEWVIDRTPFGDNVPVIPGATFVDNLEPYIERKLFTVNTGHAAAAYFGFEAGLSKISEAMADQDVAADVRAVLDETKELLIHKHGFNREEQEAYVEKILGRFTNPHLPDTVNRVGRAPLRKLSRHERFIGPAAELAERGIVPEALLGAIAAALRFNDPADAEAAELAQIVASSTAAEATEKVTGLTPGHPLFAAVEALVEEVKAEVKA</sequence>
<dbReference type="EC" id="1.1.1.17" evidence="1"/>
<dbReference type="EMBL" id="CP000454">
    <property type="protein sequence ID" value="ABK05378.1"/>
    <property type="molecule type" value="Genomic_DNA"/>
</dbReference>
<dbReference type="RefSeq" id="WP_011693826.1">
    <property type="nucleotide sequence ID" value="NC_008541.1"/>
</dbReference>
<dbReference type="SMR" id="A0K258"/>
<dbReference type="STRING" id="290399.Arth_4003"/>
<dbReference type="KEGG" id="art:Arth_4003"/>
<dbReference type="eggNOG" id="COG0246">
    <property type="taxonomic scope" value="Bacteria"/>
</dbReference>
<dbReference type="HOGENOM" id="CLU_036089_0_1_11"/>
<dbReference type="OrthoDB" id="271711at2"/>
<dbReference type="Proteomes" id="UP000000754">
    <property type="component" value="Chromosome"/>
</dbReference>
<dbReference type="GO" id="GO:0005829">
    <property type="term" value="C:cytosol"/>
    <property type="evidence" value="ECO:0007669"/>
    <property type="project" value="TreeGrafter"/>
</dbReference>
<dbReference type="GO" id="GO:0008926">
    <property type="term" value="F:mannitol-1-phosphate 5-dehydrogenase activity"/>
    <property type="evidence" value="ECO:0007669"/>
    <property type="project" value="UniProtKB-UniRule"/>
</dbReference>
<dbReference type="GO" id="GO:0019592">
    <property type="term" value="P:mannitol catabolic process"/>
    <property type="evidence" value="ECO:0007669"/>
    <property type="project" value="TreeGrafter"/>
</dbReference>
<dbReference type="Gene3D" id="1.10.1040.10">
    <property type="entry name" value="N-(1-d-carboxylethyl)-l-norvaline Dehydrogenase, domain 2"/>
    <property type="match status" value="1"/>
</dbReference>
<dbReference type="Gene3D" id="3.40.50.720">
    <property type="entry name" value="NAD(P)-binding Rossmann-like Domain"/>
    <property type="match status" value="1"/>
</dbReference>
<dbReference type="HAMAP" id="MF_00196">
    <property type="entry name" value="Mannitol_dehydrog"/>
    <property type="match status" value="1"/>
</dbReference>
<dbReference type="InterPro" id="IPR008927">
    <property type="entry name" value="6-PGluconate_DH-like_C_sf"/>
</dbReference>
<dbReference type="InterPro" id="IPR013328">
    <property type="entry name" value="6PGD_dom2"/>
</dbReference>
<dbReference type="InterPro" id="IPR023028">
    <property type="entry name" value="Mannitol_1_phos_5_DH"/>
</dbReference>
<dbReference type="InterPro" id="IPR000669">
    <property type="entry name" value="Mannitol_DH"/>
</dbReference>
<dbReference type="InterPro" id="IPR013118">
    <property type="entry name" value="Mannitol_DH_C"/>
</dbReference>
<dbReference type="InterPro" id="IPR013131">
    <property type="entry name" value="Mannitol_DH_N"/>
</dbReference>
<dbReference type="InterPro" id="IPR036291">
    <property type="entry name" value="NAD(P)-bd_dom_sf"/>
</dbReference>
<dbReference type="NCBIfam" id="NF002646">
    <property type="entry name" value="PRK02318.1-2"/>
    <property type="match status" value="1"/>
</dbReference>
<dbReference type="NCBIfam" id="NF002652">
    <property type="entry name" value="PRK02318.2-5"/>
    <property type="match status" value="1"/>
</dbReference>
<dbReference type="PANTHER" id="PTHR30524:SF0">
    <property type="entry name" value="ALTRONATE OXIDOREDUCTASE-RELATED"/>
    <property type="match status" value="1"/>
</dbReference>
<dbReference type="PANTHER" id="PTHR30524">
    <property type="entry name" value="MANNITOL-1-PHOSPHATE 5-DEHYDROGENASE"/>
    <property type="match status" value="1"/>
</dbReference>
<dbReference type="Pfam" id="PF01232">
    <property type="entry name" value="Mannitol_dh"/>
    <property type="match status" value="1"/>
</dbReference>
<dbReference type="Pfam" id="PF08125">
    <property type="entry name" value="Mannitol_dh_C"/>
    <property type="match status" value="1"/>
</dbReference>
<dbReference type="PRINTS" id="PR00084">
    <property type="entry name" value="MTLDHDRGNASE"/>
</dbReference>
<dbReference type="SUPFAM" id="SSF48179">
    <property type="entry name" value="6-phosphogluconate dehydrogenase C-terminal domain-like"/>
    <property type="match status" value="1"/>
</dbReference>
<dbReference type="SUPFAM" id="SSF51735">
    <property type="entry name" value="NAD(P)-binding Rossmann-fold domains"/>
    <property type="match status" value="1"/>
</dbReference>
<organism>
    <name type="scientific">Arthrobacter sp. (strain FB24)</name>
    <dbReference type="NCBI Taxonomy" id="290399"/>
    <lineage>
        <taxon>Bacteria</taxon>
        <taxon>Bacillati</taxon>
        <taxon>Actinomycetota</taxon>
        <taxon>Actinomycetes</taxon>
        <taxon>Micrococcales</taxon>
        <taxon>Micrococcaceae</taxon>
        <taxon>Arthrobacter</taxon>
    </lineage>
</organism>